<organism>
    <name type="scientific">Azotobacter vinelandii (strain DJ / ATCC BAA-1303)</name>
    <dbReference type="NCBI Taxonomy" id="322710"/>
    <lineage>
        <taxon>Bacteria</taxon>
        <taxon>Pseudomonadati</taxon>
        <taxon>Pseudomonadota</taxon>
        <taxon>Gammaproteobacteria</taxon>
        <taxon>Pseudomonadales</taxon>
        <taxon>Pseudomonadaceae</taxon>
        <taxon>Azotobacter</taxon>
    </lineage>
</organism>
<feature type="chain" id="PRO_1000204497" description="Soluble pyridine nucleotide transhydrogenase">
    <location>
        <begin position="1"/>
        <end position="464"/>
    </location>
</feature>
<feature type="binding site" evidence="1">
    <location>
        <begin position="35"/>
        <end position="44"/>
    </location>
    <ligand>
        <name>FAD</name>
        <dbReference type="ChEBI" id="CHEBI:57692"/>
    </ligand>
</feature>
<protein>
    <recommendedName>
        <fullName evidence="1">Soluble pyridine nucleotide transhydrogenase</fullName>
        <shortName evidence="1">STH</shortName>
        <ecNumber evidence="1">1.6.1.1</ecNumber>
    </recommendedName>
    <alternativeName>
        <fullName evidence="1">NAD(P)(+) transhydrogenase [B-specific]</fullName>
    </alternativeName>
</protein>
<gene>
    <name evidence="1" type="primary">sthA</name>
    <name type="ordered locus">Avin_14670</name>
</gene>
<proteinExistence type="inferred from homology"/>
<comment type="function">
    <text evidence="1">Conversion of NADPH, generated by peripheral catabolic pathways, to NADH, which can enter the respiratory chain for energy generation.</text>
</comment>
<comment type="catalytic activity">
    <reaction evidence="1">
        <text>NAD(+) + NADPH = NADH + NADP(+)</text>
        <dbReference type="Rhea" id="RHEA:11692"/>
        <dbReference type="ChEBI" id="CHEBI:57540"/>
        <dbReference type="ChEBI" id="CHEBI:57783"/>
        <dbReference type="ChEBI" id="CHEBI:57945"/>
        <dbReference type="ChEBI" id="CHEBI:58349"/>
        <dbReference type="EC" id="1.6.1.1"/>
    </reaction>
</comment>
<comment type="cofactor">
    <cofactor evidence="1">
        <name>FAD</name>
        <dbReference type="ChEBI" id="CHEBI:57692"/>
    </cofactor>
    <text evidence="1">Binds 1 FAD per subunit.</text>
</comment>
<comment type="subcellular location">
    <subcellularLocation>
        <location evidence="1">Cytoplasm</location>
    </subcellularLocation>
</comment>
<comment type="similarity">
    <text evidence="1">Belongs to the class-I pyridine nucleotide-disulfide oxidoreductase family.</text>
</comment>
<reference key="1">
    <citation type="journal article" date="2009" name="J. Bacteriol.">
        <title>Genome sequence of Azotobacter vinelandii, an obligate aerobe specialized to support diverse anaerobic metabolic processes.</title>
        <authorList>
            <person name="Setubal J.C."/>
            <person name="Dos Santos P."/>
            <person name="Goldman B.S."/>
            <person name="Ertesvaag H."/>
            <person name="Espin G."/>
            <person name="Rubio L.M."/>
            <person name="Valla S."/>
            <person name="Almeida N.F."/>
            <person name="Balasubramanian D."/>
            <person name="Cromes L."/>
            <person name="Curatti L."/>
            <person name="Du Z."/>
            <person name="Godsy E."/>
            <person name="Goodner B."/>
            <person name="Hellner-Burris K."/>
            <person name="Hernandez J.A."/>
            <person name="Houmiel K."/>
            <person name="Imperial J."/>
            <person name="Kennedy C."/>
            <person name="Larson T.J."/>
            <person name="Latreille P."/>
            <person name="Ligon L.S."/>
            <person name="Lu J."/>
            <person name="Maerk M."/>
            <person name="Miller N.M."/>
            <person name="Norton S."/>
            <person name="O'Carroll I.P."/>
            <person name="Paulsen I."/>
            <person name="Raulfs E.C."/>
            <person name="Roemer R."/>
            <person name="Rosser J."/>
            <person name="Segura D."/>
            <person name="Slater S."/>
            <person name="Stricklin S.L."/>
            <person name="Studholme D.J."/>
            <person name="Sun J."/>
            <person name="Viana C.J."/>
            <person name="Wallin E."/>
            <person name="Wang B."/>
            <person name="Wheeler C."/>
            <person name="Zhu H."/>
            <person name="Dean D.R."/>
            <person name="Dixon R."/>
            <person name="Wood D."/>
        </authorList>
    </citation>
    <scope>NUCLEOTIDE SEQUENCE [LARGE SCALE GENOMIC DNA]</scope>
    <source>
        <strain>DJ / ATCC BAA-1303</strain>
    </source>
</reference>
<name>STHA_AZOVD</name>
<sequence>MAVYNYDVVVIGTGPAGEGAAMNAVKAGRKVAVVDDRPQVGGNCTHLGTIPSKALRHSVRQIMQYNNNPLFRQIGEPRWFSFADVLKSAEQVIAKQVSSRTGYYARNRIDTFFGTASFCDEHTIEVVHLNGMVETLVAKQFVIATGSRPYRPADVDFTHPRIYDSDTILSLGHTPRRLIIYGAGVIGCEYASIFSGLGVLVDLIDNRDQLLSFLDDEISDSLSYHLRNNNVLIRHNEEYERVEGLDNGVILHLKSGKKIKADAFLWSNGRTGNTDKLGLENIGLKANGRGQIQVDEHYRTEVSNIYAAGDVIGWPSLASAAYDQGRSAAGSITENDSWRFVDDVPTGIYTIPEISSVGKTERELTQAKVPYEVGKAFFKGMARAQIAVEKAGMLKILFHRETLEILGVHCFGYQASEIVHIGQAIMNQKGEANTLKYFINTTFNYPTMAEAYRVAAYDGLNRLF</sequence>
<dbReference type="EC" id="1.6.1.1" evidence="1"/>
<dbReference type="EMBL" id="CP001157">
    <property type="protein sequence ID" value="ACO77683.1"/>
    <property type="molecule type" value="Genomic_DNA"/>
</dbReference>
<dbReference type="RefSeq" id="WP_012700102.1">
    <property type="nucleotide sequence ID" value="NC_012560.1"/>
</dbReference>
<dbReference type="SMR" id="C1DR10"/>
<dbReference type="STRING" id="322710.Avin_14670"/>
<dbReference type="EnsemblBacteria" id="ACO77683">
    <property type="protein sequence ID" value="ACO77683"/>
    <property type="gene ID" value="Avin_14670"/>
</dbReference>
<dbReference type="GeneID" id="88184766"/>
<dbReference type="KEGG" id="avn:Avin_14670"/>
<dbReference type="eggNOG" id="COG1249">
    <property type="taxonomic scope" value="Bacteria"/>
</dbReference>
<dbReference type="HOGENOM" id="CLU_016755_0_0_6"/>
<dbReference type="OrthoDB" id="9800167at2"/>
<dbReference type="Proteomes" id="UP000002424">
    <property type="component" value="Chromosome"/>
</dbReference>
<dbReference type="GO" id="GO:0005829">
    <property type="term" value="C:cytosol"/>
    <property type="evidence" value="ECO:0007669"/>
    <property type="project" value="TreeGrafter"/>
</dbReference>
<dbReference type="GO" id="GO:0004148">
    <property type="term" value="F:dihydrolipoyl dehydrogenase (NADH) activity"/>
    <property type="evidence" value="ECO:0007669"/>
    <property type="project" value="TreeGrafter"/>
</dbReference>
<dbReference type="GO" id="GO:0050660">
    <property type="term" value="F:flavin adenine dinucleotide binding"/>
    <property type="evidence" value="ECO:0007669"/>
    <property type="project" value="TreeGrafter"/>
</dbReference>
<dbReference type="GO" id="GO:0003957">
    <property type="term" value="F:NAD(P)+ transhydrogenase (Si-specific) activity"/>
    <property type="evidence" value="ECO:0007669"/>
    <property type="project" value="UniProtKB-UniRule"/>
</dbReference>
<dbReference type="GO" id="GO:0006103">
    <property type="term" value="P:2-oxoglutarate metabolic process"/>
    <property type="evidence" value="ECO:0007669"/>
    <property type="project" value="TreeGrafter"/>
</dbReference>
<dbReference type="GO" id="GO:0006739">
    <property type="term" value="P:NADP metabolic process"/>
    <property type="evidence" value="ECO:0007669"/>
    <property type="project" value="UniProtKB-UniRule"/>
</dbReference>
<dbReference type="FunFam" id="3.30.390.30:FF:000002">
    <property type="entry name" value="Soluble pyridine nucleotide transhydrogenase"/>
    <property type="match status" value="1"/>
</dbReference>
<dbReference type="FunFam" id="3.50.50.60:FF:000008">
    <property type="entry name" value="Soluble pyridine nucleotide transhydrogenase"/>
    <property type="match status" value="1"/>
</dbReference>
<dbReference type="Gene3D" id="3.30.390.30">
    <property type="match status" value="1"/>
</dbReference>
<dbReference type="Gene3D" id="3.50.50.60">
    <property type="entry name" value="FAD/NAD(P)-binding domain"/>
    <property type="match status" value="2"/>
</dbReference>
<dbReference type="HAMAP" id="MF_00247">
    <property type="entry name" value="SthA"/>
    <property type="match status" value="1"/>
</dbReference>
<dbReference type="InterPro" id="IPR050151">
    <property type="entry name" value="Class-I_Pyr_Nuc-Dis_Oxidored"/>
</dbReference>
<dbReference type="InterPro" id="IPR036188">
    <property type="entry name" value="FAD/NAD-bd_sf"/>
</dbReference>
<dbReference type="InterPro" id="IPR023753">
    <property type="entry name" value="FAD/NAD-binding_dom"/>
</dbReference>
<dbReference type="InterPro" id="IPR016156">
    <property type="entry name" value="FAD/NAD-linked_Rdtase_dimer_sf"/>
</dbReference>
<dbReference type="InterPro" id="IPR001100">
    <property type="entry name" value="Pyr_nuc-diS_OxRdtase"/>
</dbReference>
<dbReference type="InterPro" id="IPR004099">
    <property type="entry name" value="Pyr_nucl-diS_OxRdtase_dimer"/>
</dbReference>
<dbReference type="InterPro" id="IPR022962">
    <property type="entry name" value="STH_gammaproteobact"/>
</dbReference>
<dbReference type="NCBIfam" id="NF003585">
    <property type="entry name" value="PRK05249.1"/>
    <property type="match status" value="1"/>
</dbReference>
<dbReference type="PANTHER" id="PTHR22912">
    <property type="entry name" value="DISULFIDE OXIDOREDUCTASE"/>
    <property type="match status" value="1"/>
</dbReference>
<dbReference type="PANTHER" id="PTHR22912:SF93">
    <property type="entry name" value="SOLUBLE PYRIDINE NUCLEOTIDE TRANSHYDROGENASE"/>
    <property type="match status" value="1"/>
</dbReference>
<dbReference type="Pfam" id="PF07992">
    <property type="entry name" value="Pyr_redox_2"/>
    <property type="match status" value="1"/>
</dbReference>
<dbReference type="Pfam" id="PF02852">
    <property type="entry name" value="Pyr_redox_dim"/>
    <property type="match status" value="1"/>
</dbReference>
<dbReference type="PIRSF" id="PIRSF000350">
    <property type="entry name" value="Mercury_reductase_MerA"/>
    <property type="match status" value="1"/>
</dbReference>
<dbReference type="PRINTS" id="PR00368">
    <property type="entry name" value="FADPNR"/>
</dbReference>
<dbReference type="PRINTS" id="PR00411">
    <property type="entry name" value="PNDRDTASEI"/>
</dbReference>
<dbReference type="SUPFAM" id="SSF51905">
    <property type="entry name" value="FAD/NAD(P)-binding domain"/>
    <property type="match status" value="1"/>
</dbReference>
<dbReference type="SUPFAM" id="SSF55424">
    <property type="entry name" value="FAD/NAD-linked reductases, dimerisation (C-terminal) domain"/>
    <property type="match status" value="1"/>
</dbReference>
<accession>C1DR10</accession>
<keyword id="KW-0963">Cytoplasm</keyword>
<keyword id="KW-0274">FAD</keyword>
<keyword id="KW-0285">Flavoprotein</keyword>
<keyword id="KW-0520">NAD</keyword>
<keyword id="KW-0521">NADP</keyword>
<keyword id="KW-0560">Oxidoreductase</keyword>
<evidence type="ECO:0000255" key="1">
    <source>
        <dbReference type="HAMAP-Rule" id="MF_00247"/>
    </source>
</evidence>